<proteinExistence type="inferred from homology"/>
<sequence>MHSYTLLAPAKINLYLEIVGDRPDGFHELVMVMQTVALCDRITLRPNGLQEFRLFCHHPLVPQDSSNLAHRAATLMAKEFPRLFANYGGIDITIEKYIPVAAGLAGGSTNAAAVLVGIDLIWELGLTRPELETLAARLGSDTSFCVTGGTVICTGRGEILDPIAPLTGLWVILAKYDHLSVSTPWAYQSYRQKFQDTYLSSPEDFHHRRQQVSSGALVQAIAQKKPAAIGKFIHNDLEKVVLPEFPLVAELRQVLGDLGGLGTMMSGSGPTVFTLCSSQEVAETIVKEAREILVAPDLQFWIAPITDTGIQVT</sequence>
<feature type="chain" id="PRO_1000075051" description="4-diphosphocytidyl-2-C-methyl-D-erythritol kinase">
    <location>
        <begin position="1"/>
        <end position="313"/>
    </location>
</feature>
<feature type="active site" evidence="1">
    <location>
        <position position="11"/>
    </location>
</feature>
<feature type="active site" evidence="1">
    <location>
        <position position="141"/>
    </location>
</feature>
<feature type="binding site" evidence="1">
    <location>
        <begin position="99"/>
        <end position="109"/>
    </location>
    <ligand>
        <name>ATP</name>
        <dbReference type="ChEBI" id="CHEBI:30616"/>
    </ligand>
</feature>
<protein>
    <recommendedName>
        <fullName evidence="1">4-diphosphocytidyl-2-C-methyl-D-erythritol kinase</fullName>
        <shortName evidence="1">CMK</shortName>
        <ecNumber evidence="1">2.7.1.148</ecNumber>
    </recommendedName>
    <alternativeName>
        <fullName evidence="1">4-(cytidine-5'-diphospho)-2-C-methyl-D-erythritol kinase</fullName>
    </alternativeName>
</protein>
<name>ISPE_MICAN</name>
<reference key="1">
    <citation type="journal article" date="2007" name="DNA Res.">
        <title>Complete genomic structure of the bloom-forming toxic cyanobacterium Microcystis aeruginosa NIES-843.</title>
        <authorList>
            <person name="Kaneko T."/>
            <person name="Nakajima N."/>
            <person name="Okamoto S."/>
            <person name="Suzuki I."/>
            <person name="Tanabe Y."/>
            <person name="Tamaoki M."/>
            <person name="Nakamura Y."/>
            <person name="Kasai F."/>
            <person name="Watanabe A."/>
            <person name="Kawashima K."/>
            <person name="Kishida Y."/>
            <person name="Ono A."/>
            <person name="Shimizu Y."/>
            <person name="Takahashi C."/>
            <person name="Minami C."/>
            <person name="Fujishiro T."/>
            <person name="Kohara M."/>
            <person name="Katoh M."/>
            <person name="Nakazaki N."/>
            <person name="Nakayama S."/>
            <person name="Yamada M."/>
            <person name="Tabata S."/>
            <person name="Watanabe M.M."/>
        </authorList>
    </citation>
    <scope>NUCLEOTIDE SEQUENCE [LARGE SCALE GENOMIC DNA]</scope>
    <source>
        <strain>NIES-843 / IAM M-247</strain>
    </source>
</reference>
<organism>
    <name type="scientific">Microcystis aeruginosa (strain NIES-843 / IAM M-2473)</name>
    <dbReference type="NCBI Taxonomy" id="449447"/>
    <lineage>
        <taxon>Bacteria</taxon>
        <taxon>Bacillati</taxon>
        <taxon>Cyanobacteriota</taxon>
        <taxon>Cyanophyceae</taxon>
        <taxon>Oscillatoriophycideae</taxon>
        <taxon>Chroococcales</taxon>
        <taxon>Microcystaceae</taxon>
        <taxon>Microcystis</taxon>
    </lineage>
</organism>
<comment type="function">
    <text evidence="1">Catalyzes the phosphorylation of the position 2 hydroxy group of 4-diphosphocytidyl-2C-methyl-D-erythritol.</text>
</comment>
<comment type="catalytic activity">
    <reaction evidence="1">
        <text>4-CDP-2-C-methyl-D-erythritol + ATP = 4-CDP-2-C-methyl-D-erythritol 2-phosphate + ADP + H(+)</text>
        <dbReference type="Rhea" id="RHEA:18437"/>
        <dbReference type="ChEBI" id="CHEBI:15378"/>
        <dbReference type="ChEBI" id="CHEBI:30616"/>
        <dbReference type="ChEBI" id="CHEBI:57823"/>
        <dbReference type="ChEBI" id="CHEBI:57919"/>
        <dbReference type="ChEBI" id="CHEBI:456216"/>
        <dbReference type="EC" id="2.7.1.148"/>
    </reaction>
</comment>
<comment type="pathway">
    <text evidence="1">Isoprenoid biosynthesis; isopentenyl diphosphate biosynthesis via DXP pathway; isopentenyl diphosphate from 1-deoxy-D-xylulose 5-phosphate: step 3/6.</text>
</comment>
<comment type="similarity">
    <text evidence="1">Belongs to the GHMP kinase family. IspE subfamily.</text>
</comment>
<accession>B0JNB0</accession>
<gene>
    <name evidence="1" type="primary">ispE</name>
    <name type="ordered locus">MAE_04520</name>
</gene>
<keyword id="KW-0067">ATP-binding</keyword>
<keyword id="KW-0414">Isoprene biosynthesis</keyword>
<keyword id="KW-0418">Kinase</keyword>
<keyword id="KW-0547">Nucleotide-binding</keyword>
<keyword id="KW-0808">Transferase</keyword>
<evidence type="ECO:0000255" key="1">
    <source>
        <dbReference type="HAMAP-Rule" id="MF_00061"/>
    </source>
</evidence>
<dbReference type="EC" id="2.7.1.148" evidence="1"/>
<dbReference type="EMBL" id="AP009552">
    <property type="protein sequence ID" value="BAG00274.1"/>
    <property type="molecule type" value="Genomic_DNA"/>
</dbReference>
<dbReference type="RefSeq" id="WP_002797798.1">
    <property type="nucleotide sequence ID" value="NC_010296.1"/>
</dbReference>
<dbReference type="SMR" id="B0JNB0"/>
<dbReference type="STRING" id="449447.MAE_04520"/>
<dbReference type="PaxDb" id="449447-MAE_04520"/>
<dbReference type="EnsemblBacteria" id="BAG00274">
    <property type="protein sequence ID" value="BAG00274"/>
    <property type="gene ID" value="MAE_04520"/>
</dbReference>
<dbReference type="KEGG" id="mar:MAE_04520"/>
<dbReference type="eggNOG" id="COG1947">
    <property type="taxonomic scope" value="Bacteria"/>
</dbReference>
<dbReference type="HOGENOM" id="CLU_053057_1_1_3"/>
<dbReference type="BioCyc" id="MAER449447:MAE_RS02080-MONOMER"/>
<dbReference type="UniPathway" id="UPA00056">
    <property type="reaction ID" value="UER00094"/>
</dbReference>
<dbReference type="Proteomes" id="UP000001510">
    <property type="component" value="Chromosome"/>
</dbReference>
<dbReference type="GO" id="GO:0050515">
    <property type="term" value="F:4-(cytidine 5'-diphospho)-2-C-methyl-D-erythritol kinase activity"/>
    <property type="evidence" value="ECO:0007669"/>
    <property type="project" value="UniProtKB-UniRule"/>
</dbReference>
<dbReference type="GO" id="GO:0005524">
    <property type="term" value="F:ATP binding"/>
    <property type="evidence" value="ECO:0007669"/>
    <property type="project" value="UniProtKB-UniRule"/>
</dbReference>
<dbReference type="GO" id="GO:0019288">
    <property type="term" value="P:isopentenyl diphosphate biosynthetic process, methylerythritol 4-phosphate pathway"/>
    <property type="evidence" value="ECO:0007669"/>
    <property type="project" value="UniProtKB-UniRule"/>
</dbReference>
<dbReference type="GO" id="GO:0016114">
    <property type="term" value="P:terpenoid biosynthetic process"/>
    <property type="evidence" value="ECO:0007669"/>
    <property type="project" value="InterPro"/>
</dbReference>
<dbReference type="Gene3D" id="3.30.230.10">
    <property type="match status" value="1"/>
</dbReference>
<dbReference type="Gene3D" id="3.30.70.890">
    <property type="entry name" value="GHMP kinase, C-terminal domain"/>
    <property type="match status" value="1"/>
</dbReference>
<dbReference type="HAMAP" id="MF_00061">
    <property type="entry name" value="IspE"/>
    <property type="match status" value="1"/>
</dbReference>
<dbReference type="InterPro" id="IPR013750">
    <property type="entry name" value="GHMP_kinase_C_dom"/>
</dbReference>
<dbReference type="InterPro" id="IPR036554">
    <property type="entry name" value="GHMP_kinase_C_sf"/>
</dbReference>
<dbReference type="InterPro" id="IPR006204">
    <property type="entry name" value="GHMP_kinase_N_dom"/>
</dbReference>
<dbReference type="InterPro" id="IPR004424">
    <property type="entry name" value="IspE"/>
</dbReference>
<dbReference type="InterPro" id="IPR020568">
    <property type="entry name" value="Ribosomal_Su5_D2-typ_SF"/>
</dbReference>
<dbReference type="InterPro" id="IPR014721">
    <property type="entry name" value="Ribsml_uS5_D2-typ_fold_subgr"/>
</dbReference>
<dbReference type="NCBIfam" id="TIGR00154">
    <property type="entry name" value="ispE"/>
    <property type="match status" value="1"/>
</dbReference>
<dbReference type="PANTHER" id="PTHR43527">
    <property type="entry name" value="4-DIPHOSPHOCYTIDYL-2-C-METHYL-D-ERYTHRITOL KINASE, CHLOROPLASTIC"/>
    <property type="match status" value="1"/>
</dbReference>
<dbReference type="PANTHER" id="PTHR43527:SF2">
    <property type="entry name" value="4-DIPHOSPHOCYTIDYL-2-C-METHYL-D-ERYTHRITOL KINASE, CHLOROPLASTIC"/>
    <property type="match status" value="1"/>
</dbReference>
<dbReference type="Pfam" id="PF08544">
    <property type="entry name" value="GHMP_kinases_C"/>
    <property type="match status" value="1"/>
</dbReference>
<dbReference type="Pfam" id="PF00288">
    <property type="entry name" value="GHMP_kinases_N"/>
    <property type="match status" value="1"/>
</dbReference>
<dbReference type="PIRSF" id="PIRSF010376">
    <property type="entry name" value="IspE"/>
    <property type="match status" value="1"/>
</dbReference>
<dbReference type="SUPFAM" id="SSF55060">
    <property type="entry name" value="GHMP Kinase, C-terminal domain"/>
    <property type="match status" value="1"/>
</dbReference>
<dbReference type="SUPFAM" id="SSF54211">
    <property type="entry name" value="Ribosomal protein S5 domain 2-like"/>
    <property type="match status" value="1"/>
</dbReference>